<keyword id="KW-0072">Autophagy</keyword>
<keyword id="KW-1017">Isopeptide bond</keyword>
<keyword id="KW-0472">Membrane</keyword>
<keyword id="KW-1185">Reference proteome</keyword>
<keyword id="KW-0813">Transport</keyword>
<keyword id="KW-0832">Ubl conjugation</keyword>
<name>ATG5_GIBZE</name>
<feature type="chain" id="PRO_0000443875" description="Autophagy-related protein 5">
    <location>
        <begin position="1"/>
        <end position="254"/>
    </location>
</feature>
<feature type="cross-link" description="Glycyl lysine isopeptide (Lys-Gly) (interchain with G-Cter in ATG12)" evidence="1">
    <location>
        <position position="102"/>
    </location>
</feature>
<protein>
    <recommendedName>
        <fullName evidence="3">Autophagy-related protein 5</fullName>
    </recommendedName>
</protein>
<sequence length="254" mass="28023">MSSPIPQALWSAQIPLHITHPASPTTPFITSIPRFSYLALLIPRLSTFFNSPCSSFHFEDVQLRNLAVGLLVDLYQPALPWKLTVNDGVGWDIADTFLNCVKEADFVRNGNANQIMKMSKENTTQLWNAVIDNDHPSFNRINSHLLNAPTALKHVPIRIYVPTSGPDSSATHPEHATFKVIQSLMAATSSDRRPKLLGQALKEVLPGLFPSSRDPILAKVVMHGAGVPFDAPLEDLMREAAYPDGWLCLVVIVL</sequence>
<organism>
    <name type="scientific">Gibberella zeae (strain ATCC MYA-4620 / CBS 123657 / FGSC 9075 / NRRL 31084 / PH-1)</name>
    <name type="common">Wheat head blight fungus</name>
    <name type="synonym">Fusarium graminearum</name>
    <dbReference type="NCBI Taxonomy" id="229533"/>
    <lineage>
        <taxon>Eukaryota</taxon>
        <taxon>Fungi</taxon>
        <taxon>Dikarya</taxon>
        <taxon>Ascomycota</taxon>
        <taxon>Pezizomycotina</taxon>
        <taxon>Sordariomycetes</taxon>
        <taxon>Hypocreomycetidae</taxon>
        <taxon>Hypocreales</taxon>
        <taxon>Nectriaceae</taxon>
        <taxon>Fusarium</taxon>
    </lineage>
</organism>
<comment type="function">
    <text evidence="1 2">Involved in cytoplasm to vacuole transport (Cvt) and autophagic vesicle formation (By similarity). Autophagy is essential for maintenance of amino acid levels and protein synthesis under nitrogen starvation (By similarity). Required for selective autophagic degradation of the nucleus (nucleophagy) (By similarity). Also required for mitophagy, which eliminates defective or superfluous mitochondria in order to fulfill cellular energy requirements and prevent excess ROS production (By similarity). Conjugation with ATG12, through a ubiquitin-like conjugating system involving ATG7 as an E1-like activating enzyme and ATG10 as an E2-like conjugating enzyme, is essential for its function (By similarity). The ATG12-ATG5 conjugate acts as an E3-like enzyme which is required for lipidation of ATG8 and ATG8 association to the vesicle membranes (By similarity). ATG12-ATG5 rearranges the ATG3 catalytic center and enhances its E2 activity (By similarity). Autophagy is required for proper vegetative growth, asexual/sexual reproduction, and full virulence (PubMed:28894236). Autophagy is particularly involved in the biosynthesis of deoxynivalenol (DON), an important virulence determinant (PubMed:28894236).</text>
</comment>
<comment type="subunit">
    <text evidence="1">Conjugated with ATG12 (By similarity). The ATG5-ATG12 conjugate forms a complex with several units of ATG16 (By similarity). The ATG12-ATG5 conjugate also associates with ATG3 (By similarity).</text>
</comment>
<comment type="subcellular location">
    <subcellularLocation>
        <location evidence="1">Preautophagosomal structure membrane</location>
        <topology evidence="1">Peripheral membrane protein</topology>
    </subcellularLocation>
    <text evidence="1">Localizes to the isolation membrane (IM), a membrane sac which is generated from the pre-autophagosomal structure (PAS) (By similarity). Ultimately, the IM expands to become a mature autophagosome (By similarity). Localizes also to a dot at the junction between the IM and the vacuolar membrane, termed the vacuole-IM contact site (VICS) (By similarity). Correct localization to the PAS requires ATG21 (By similarity).</text>
</comment>
<comment type="PTM">
    <text evidence="1">Conjugated to ATG12; which is essential for autophagy (By similarity). Conjugation with ATG12 involves ATG7 as an E1-like activating enzyme and ATG10 as an E2-like conjugating enzyme (By similarity).</text>
</comment>
<comment type="disruption phenotype">
    <text evidence="2">Blocks autophagy (PubMed:28894236). Significantly decreases the radial growth of colonies under nutrient-rich conditions (PubMed:28894236). Strongly reduces conidiation and completely fails to form any perithecia (PubMed:28894236).</text>
</comment>
<comment type="similarity">
    <text evidence="4">Belongs to the ATG5 family.</text>
</comment>
<gene>
    <name evidence="3" type="primary">ATG5</name>
    <name type="ORF">FG10053</name>
    <name type="ORF">FGRAMPH1_01T07167</name>
</gene>
<dbReference type="EMBL" id="HG970332">
    <property type="protein sequence ID" value="CEF75388.1"/>
    <property type="molecule type" value="Genomic_DNA"/>
</dbReference>
<dbReference type="RefSeq" id="XP_011318981.1">
    <property type="nucleotide sequence ID" value="XM_011320679.1"/>
</dbReference>
<dbReference type="SMR" id="I1S039"/>
<dbReference type="STRING" id="229533.I1S039"/>
<dbReference type="KEGG" id="fgr:FGSG_10053"/>
<dbReference type="VEuPathDB" id="FungiDB:FGRAMPH1_01G07167"/>
<dbReference type="eggNOG" id="KOG2976">
    <property type="taxonomic scope" value="Eukaryota"/>
</dbReference>
<dbReference type="HOGENOM" id="CLU_051894_2_0_1"/>
<dbReference type="InParanoid" id="I1S039"/>
<dbReference type="OrthoDB" id="17046at110618"/>
<dbReference type="Proteomes" id="UP000070720">
    <property type="component" value="Chromosome 1"/>
</dbReference>
<dbReference type="GO" id="GO:0034274">
    <property type="term" value="C:Atg12-Atg5-Atg16 complex"/>
    <property type="evidence" value="ECO:0007669"/>
    <property type="project" value="TreeGrafter"/>
</dbReference>
<dbReference type="GO" id="GO:0005776">
    <property type="term" value="C:autophagosome"/>
    <property type="evidence" value="ECO:0007669"/>
    <property type="project" value="TreeGrafter"/>
</dbReference>
<dbReference type="GO" id="GO:0044233">
    <property type="term" value="C:mitochondria-associated endoplasmic reticulum membrane contact site"/>
    <property type="evidence" value="ECO:0007669"/>
    <property type="project" value="TreeGrafter"/>
</dbReference>
<dbReference type="GO" id="GO:0061908">
    <property type="term" value="C:phagophore"/>
    <property type="evidence" value="ECO:0007669"/>
    <property type="project" value="TreeGrafter"/>
</dbReference>
<dbReference type="GO" id="GO:0034045">
    <property type="term" value="C:phagophore assembly site membrane"/>
    <property type="evidence" value="ECO:0007669"/>
    <property type="project" value="UniProtKB-SubCell"/>
</dbReference>
<dbReference type="GO" id="GO:0019776">
    <property type="term" value="F:Atg8-family ligase activity"/>
    <property type="evidence" value="ECO:0007669"/>
    <property type="project" value="TreeGrafter"/>
</dbReference>
<dbReference type="GO" id="GO:0000422">
    <property type="term" value="P:autophagy of mitochondrion"/>
    <property type="evidence" value="ECO:0007669"/>
    <property type="project" value="TreeGrafter"/>
</dbReference>
<dbReference type="GO" id="GO:0006995">
    <property type="term" value="P:cellular response to nitrogen starvation"/>
    <property type="evidence" value="ECO:0007669"/>
    <property type="project" value="TreeGrafter"/>
</dbReference>
<dbReference type="GO" id="GO:0034727">
    <property type="term" value="P:piecemeal microautophagy of the nucleus"/>
    <property type="evidence" value="ECO:0007669"/>
    <property type="project" value="TreeGrafter"/>
</dbReference>
<dbReference type="Gene3D" id="3.10.20.620">
    <property type="match status" value="1"/>
</dbReference>
<dbReference type="Gene3D" id="1.10.246.190">
    <property type="entry name" value="Autophagy protein Apg5, helix rich domain"/>
    <property type="match status" value="1"/>
</dbReference>
<dbReference type="Gene3D" id="3.10.20.90">
    <property type="entry name" value="Phosphatidylinositol 3-kinase Catalytic Subunit, Chain A, domain 1"/>
    <property type="match status" value="1"/>
</dbReference>
<dbReference type="InterPro" id="IPR007239">
    <property type="entry name" value="Atg5"/>
</dbReference>
<dbReference type="InterPro" id="IPR048940">
    <property type="entry name" value="ATG5_HBR"/>
</dbReference>
<dbReference type="InterPro" id="IPR042526">
    <property type="entry name" value="Atg5_HR"/>
</dbReference>
<dbReference type="InterPro" id="IPR048939">
    <property type="entry name" value="ATG5_UblA"/>
</dbReference>
<dbReference type="InterPro" id="IPR042527">
    <property type="entry name" value="Atg5_UblA_dom_sf"/>
</dbReference>
<dbReference type="InterPro" id="IPR048318">
    <property type="entry name" value="ATG5_UblB"/>
</dbReference>
<dbReference type="PANTHER" id="PTHR13040">
    <property type="entry name" value="AUTOPHAGY PROTEIN 5"/>
    <property type="match status" value="1"/>
</dbReference>
<dbReference type="PANTHER" id="PTHR13040:SF2">
    <property type="entry name" value="AUTOPHAGY PROTEIN 5"/>
    <property type="match status" value="1"/>
</dbReference>
<dbReference type="Pfam" id="PF20637">
    <property type="entry name" value="ATG5_HBR"/>
    <property type="match status" value="1"/>
</dbReference>
<dbReference type="Pfam" id="PF20638">
    <property type="entry name" value="ATG5_UblA"/>
    <property type="match status" value="1"/>
</dbReference>
<dbReference type="Pfam" id="PF04106">
    <property type="entry name" value="ATG5_UblB"/>
    <property type="match status" value="1"/>
</dbReference>
<proteinExistence type="inferred from homology"/>
<accession>I1S039</accession>
<evidence type="ECO:0000250" key="1">
    <source>
        <dbReference type="UniProtKB" id="Q12380"/>
    </source>
</evidence>
<evidence type="ECO:0000269" key="2">
    <source>
    </source>
</evidence>
<evidence type="ECO:0000303" key="3">
    <source>
    </source>
</evidence>
<evidence type="ECO:0000305" key="4"/>
<reference key="1">
    <citation type="journal article" date="2007" name="Science">
        <title>The Fusarium graminearum genome reveals a link between localized polymorphism and pathogen specialization.</title>
        <authorList>
            <person name="Cuomo C.A."/>
            <person name="Gueldener U."/>
            <person name="Xu J.-R."/>
            <person name="Trail F."/>
            <person name="Turgeon B.G."/>
            <person name="Di Pietro A."/>
            <person name="Walton J.D."/>
            <person name="Ma L.-J."/>
            <person name="Baker S.E."/>
            <person name="Rep M."/>
            <person name="Adam G."/>
            <person name="Antoniw J."/>
            <person name="Baldwin T."/>
            <person name="Calvo S.E."/>
            <person name="Chang Y.-L."/>
            <person name="DeCaprio D."/>
            <person name="Gale L.R."/>
            <person name="Gnerre S."/>
            <person name="Goswami R.S."/>
            <person name="Hammond-Kosack K."/>
            <person name="Harris L.J."/>
            <person name="Hilburn K."/>
            <person name="Kennell J.C."/>
            <person name="Kroken S."/>
            <person name="Magnuson J.K."/>
            <person name="Mannhaupt G."/>
            <person name="Mauceli E.W."/>
            <person name="Mewes H.-W."/>
            <person name="Mitterbauer R."/>
            <person name="Muehlbauer G."/>
            <person name="Muensterkoetter M."/>
            <person name="Nelson D."/>
            <person name="O'Donnell K."/>
            <person name="Ouellet T."/>
            <person name="Qi W."/>
            <person name="Quesneville H."/>
            <person name="Roncero M.I.G."/>
            <person name="Seong K.-Y."/>
            <person name="Tetko I.V."/>
            <person name="Urban M."/>
            <person name="Waalwijk C."/>
            <person name="Ward T.J."/>
            <person name="Yao J."/>
            <person name="Birren B.W."/>
            <person name="Kistler H.C."/>
        </authorList>
    </citation>
    <scope>NUCLEOTIDE SEQUENCE [LARGE SCALE GENOMIC DNA]</scope>
    <source>
        <strain>ATCC MYA-4620 / CBS 123657 / FGSC 9075 / NRRL 31084 / PH-1</strain>
    </source>
</reference>
<reference key="2">
    <citation type="journal article" date="2010" name="Nature">
        <title>Comparative genomics reveals mobile pathogenicity chromosomes in Fusarium.</title>
        <authorList>
            <person name="Ma L.-J."/>
            <person name="van der Does H.C."/>
            <person name="Borkovich K.A."/>
            <person name="Coleman J.J."/>
            <person name="Daboussi M.-J."/>
            <person name="Di Pietro A."/>
            <person name="Dufresne M."/>
            <person name="Freitag M."/>
            <person name="Grabherr M."/>
            <person name="Henrissat B."/>
            <person name="Houterman P.M."/>
            <person name="Kang S."/>
            <person name="Shim W.-B."/>
            <person name="Woloshuk C."/>
            <person name="Xie X."/>
            <person name="Xu J.-R."/>
            <person name="Antoniw J."/>
            <person name="Baker S.E."/>
            <person name="Bluhm B.H."/>
            <person name="Breakspear A."/>
            <person name="Brown D.W."/>
            <person name="Butchko R.A.E."/>
            <person name="Chapman S."/>
            <person name="Coulson R."/>
            <person name="Coutinho P.M."/>
            <person name="Danchin E.G.J."/>
            <person name="Diener A."/>
            <person name="Gale L.R."/>
            <person name="Gardiner D.M."/>
            <person name="Goff S."/>
            <person name="Hammond-Kosack K.E."/>
            <person name="Hilburn K."/>
            <person name="Hua-Van A."/>
            <person name="Jonkers W."/>
            <person name="Kazan K."/>
            <person name="Kodira C.D."/>
            <person name="Koehrsen M."/>
            <person name="Kumar L."/>
            <person name="Lee Y.-H."/>
            <person name="Li L."/>
            <person name="Manners J.M."/>
            <person name="Miranda-Saavedra D."/>
            <person name="Mukherjee M."/>
            <person name="Park G."/>
            <person name="Park J."/>
            <person name="Park S.-Y."/>
            <person name="Proctor R.H."/>
            <person name="Regev A."/>
            <person name="Ruiz-Roldan M.C."/>
            <person name="Sain D."/>
            <person name="Sakthikumar S."/>
            <person name="Sykes S."/>
            <person name="Schwartz D.C."/>
            <person name="Turgeon B.G."/>
            <person name="Wapinski I."/>
            <person name="Yoder O."/>
            <person name="Young S."/>
            <person name="Zeng Q."/>
            <person name="Zhou S."/>
            <person name="Galagan J."/>
            <person name="Cuomo C.A."/>
            <person name="Kistler H.C."/>
            <person name="Rep M."/>
        </authorList>
    </citation>
    <scope>GENOME REANNOTATION</scope>
    <source>
        <strain>ATCC MYA-4620 / CBS 123657 / FGSC 9075 / NRRL 31084 / PH-1</strain>
    </source>
</reference>
<reference key="3">
    <citation type="journal article" date="2015" name="BMC Genomics">
        <title>The completed genome sequence of the pathogenic ascomycete fungus Fusarium graminearum.</title>
        <authorList>
            <person name="King R."/>
            <person name="Urban M."/>
            <person name="Hammond-Kosack M.C.U."/>
            <person name="Hassani-Pak K."/>
            <person name="Hammond-Kosack K.E."/>
        </authorList>
    </citation>
    <scope>NUCLEOTIDE SEQUENCE [LARGE SCALE GENOMIC DNA]</scope>
    <source>
        <strain>ATCC MYA-4620 / CBS 123657 / FGSC 9075 / NRRL 31084 / PH-1</strain>
    </source>
</reference>
<reference key="4">
    <citation type="journal article" date="2017" name="Sci. Rep.">
        <title>Genome-wide functional analysis reveals that autophagy is necessary for growth, sporulation, deoxynivalenol production and virulence in Fusarium graminearum.</title>
        <authorList>
            <person name="Lv W."/>
            <person name="Wang C."/>
            <person name="Yang N."/>
            <person name="Que Y."/>
            <person name="Talbot N.J."/>
            <person name="Wang Z."/>
        </authorList>
    </citation>
    <scope>IDENTIFICATION</scope>
    <scope>FUNCTION</scope>
    <scope>DISRUPTION PHENOTYPE</scope>
</reference>